<name>RS12_HAEDU</name>
<evidence type="ECO:0000250" key="1"/>
<evidence type="ECO:0000255" key="2">
    <source>
        <dbReference type="HAMAP-Rule" id="MF_00403"/>
    </source>
</evidence>
<evidence type="ECO:0000305" key="3"/>
<proteinExistence type="inferred from homology"/>
<keyword id="KW-0488">Methylation</keyword>
<keyword id="KW-1185">Reference proteome</keyword>
<keyword id="KW-0687">Ribonucleoprotein</keyword>
<keyword id="KW-0689">Ribosomal protein</keyword>
<keyword id="KW-0694">RNA-binding</keyword>
<keyword id="KW-0699">rRNA-binding</keyword>
<keyword id="KW-0820">tRNA-binding</keyword>
<comment type="function">
    <text evidence="2">With S4 and S5 plays an important role in translational accuracy.</text>
</comment>
<comment type="function">
    <text evidence="2">Interacts with and stabilizes bases of the 16S rRNA that are involved in tRNA selection in the A site and with the mRNA backbone. Located at the interface of the 30S and 50S subunits, it traverses the body of the 30S subunit contacting proteins on the other side and probably holding the rRNA structure together. The combined cluster of proteins S8, S12 and S17 appears to hold together the shoulder and platform of the 30S subunit.</text>
</comment>
<comment type="subunit">
    <text evidence="2">Part of the 30S ribosomal subunit. Contacts proteins S8 and S17. May interact with IF1 in the 30S initiation complex.</text>
</comment>
<comment type="similarity">
    <text evidence="2">Belongs to the universal ribosomal protein uS12 family.</text>
</comment>
<reference key="1">
    <citation type="journal article" date="1999" name="Infect. Immun.">
        <title>Characterization of a WaaF (RfaF) homolog expressed by Haemophilus ducreyi.</title>
        <authorList>
            <person name="Bauer B.A."/>
            <person name="Lumbley S.R."/>
            <person name="Hansen E.J."/>
        </authorList>
    </citation>
    <scope>NUCLEOTIDE SEQUENCE [GENOMIC DNA]</scope>
    <source>
        <strain>35000HP / ATCC 700724</strain>
    </source>
</reference>
<reference key="2">
    <citation type="submission" date="2003-06" db="EMBL/GenBank/DDBJ databases">
        <title>The complete genome sequence of Haemophilus ducreyi.</title>
        <authorList>
            <person name="Munson R.S. Jr."/>
            <person name="Ray W.C."/>
            <person name="Mahairas G."/>
            <person name="Sabo P."/>
            <person name="Mungur R."/>
            <person name="Johnson L."/>
            <person name="Nguyen D."/>
            <person name="Wang J."/>
            <person name="Forst C."/>
            <person name="Hood L."/>
        </authorList>
    </citation>
    <scope>NUCLEOTIDE SEQUENCE [LARGE SCALE GENOMIC DNA]</scope>
    <source>
        <strain>35000HP / ATCC 700724</strain>
    </source>
</reference>
<protein>
    <recommendedName>
        <fullName evidence="2">Small ribosomal subunit protein uS12</fullName>
    </recommendedName>
    <alternativeName>
        <fullName evidence="3">30S ribosomal protein S12</fullName>
    </alternativeName>
</protein>
<sequence>MATINQLVRKPRVKKVVKSNVPALEACPQKRGVCTRVYTTTPKKPNSALRKVCRIRLTNGFEVISYIGGEGHNLQEHSVVLIRGGRVKDLPGVRYHTVRGALDCAGVKDRKQGRSKYGVKRPKA</sequence>
<feature type="chain" id="PRO_0000146231" description="Small ribosomal subunit protein uS12">
    <location>
        <begin position="1"/>
        <end position="124"/>
    </location>
</feature>
<feature type="modified residue" description="3-methylthioaspartic acid" evidence="1">
    <location>
        <position position="89"/>
    </location>
</feature>
<gene>
    <name evidence="2" type="primary">rpsL</name>
    <name type="ordered locus">HD_0655</name>
</gene>
<dbReference type="EMBL" id="AF087414">
    <property type="protein sequence ID" value="AAD16057.1"/>
    <property type="molecule type" value="Genomic_DNA"/>
</dbReference>
<dbReference type="EMBL" id="AE017143">
    <property type="protein sequence ID" value="AAP95580.1"/>
    <property type="molecule type" value="Genomic_DNA"/>
</dbReference>
<dbReference type="RefSeq" id="WP_010944633.1">
    <property type="nucleotide sequence ID" value="NC_002940.2"/>
</dbReference>
<dbReference type="SMR" id="Q9Z6D2"/>
<dbReference type="STRING" id="233412.HD_0655"/>
<dbReference type="KEGG" id="hdu:HD_0655"/>
<dbReference type="eggNOG" id="COG0048">
    <property type="taxonomic scope" value="Bacteria"/>
</dbReference>
<dbReference type="HOGENOM" id="CLU_104295_1_2_6"/>
<dbReference type="OrthoDB" id="9802366at2"/>
<dbReference type="Proteomes" id="UP000001022">
    <property type="component" value="Chromosome"/>
</dbReference>
<dbReference type="GO" id="GO:0015935">
    <property type="term" value="C:small ribosomal subunit"/>
    <property type="evidence" value="ECO:0007669"/>
    <property type="project" value="InterPro"/>
</dbReference>
<dbReference type="GO" id="GO:0019843">
    <property type="term" value="F:rRNA binding"/>
    <property type="evidence" value="ECO:0007669"/>
    <property type="project" value="UniProtKB-UniRule"/>
</dbReference>
<dbReference type="GO" id="GO:0003735">
    <property type="term" value="F:structural constituent of ribosome"/>
    <property type="evidence" value="ECO:0007669"/>
    <property type="project" value="InterPro"/>
</dbReference>
<dbReference type="GO" id="GO:0000049">
    <property type="term" value="F:tRNA binding"/>
    <property type="evidence" value="ECO:0007669"/>
    <property type="project" value="UniProtKB-UniRule"/>
</dbReference>
<dbReference type="GO" id="GO:0006412">
    <property type="term" value="P:translation"/>
    <property type="evidence" value="ECO:0007669"/>
    <property type="project" value="UniProtKB-UniRule"/>
</dbReference>
<dbReference type="CDD" id="cd03368">
    <property type="entry name" value="Ribosomal_S12"/>
    <property type="match status" value="1"/>
</dbReference>
<dbReference type="FunFam" id="2.40.50.140:FF:000001">
    <property type="entry name" value="30S ribosomal protein S12"/>
    <property type="match status" value="1"/>
</dbReference>
<dbReference type="Gene3D" id="2.40.50.140">
    <property type="entry name" value="Nucleic acid-binding proteins"/>
    <property type="match status" value="1"/>
</dbReference>
<dbReference type="HAMAP" id="MF_00403_B">
    <property type="entry name" value="Ribosomal_uS12_B"/>
    <property type="match status" value="1"/>
</dbReference>
<dbReference type="InterPro" id="IPR012340">
    <property type="entry name" value="NA-bd_OB-fold"/>
</dbReference>
<dbReference type="InterPro" id="IPR006032">
    <property type="entry name" value="Ribosomal_uS12"/>
</dbReference>
<dbReference type="InterPro" id="IPR005679">
    <property type="entry name" value="Ribosomal_uS12_bac"/>
</dbReference>
<dbReference type="NCBIfam" id="TIGR00981">
    <property type="entry name" value="rpsL_bact"/>
    <property type="match status" value="1"/>
</dbReference>
<dbReference type="PANTHER" id="PTHR11652">
    <property type="entry name" value="30S RIBOSOMAL PROTEIN S12 FAMILY MEMBER"/>
    <property type="match status" value="1"/>
</dbReference>
<dbReference type="Pfam" id="PF00164">
    <property type="entry name" value="Ribosom_S12_S23"/>
    <property type="match status" value="1"/>
</dbReference>
<dbReference type="PIRSF" id="PIRSF002133">
    <property type="entry name" value="Ribosomal_S12/S23"/>
    <property type="match status" value="1"/>
</dbReference>
<dbReference type="PRINTS" id="PR01034">
    <property type="entry name" value="RIBOSOMALS12"/>
</dbReference>
<dbReference type="SUPFAM" id="SSF50249">
    <property type="entry name" value="Nucleic acid-binding proteins"/>
    <property type="match status" value="1"/>
</dbReference>
<dbReference type="PROSITE" id="PS00055">
    <property type="entry name" value="RIBOSOMAL_S12"/>
    <property type="match status" value="1"/>
</dbReference>
<accession>Q9Z6D2</accession>
<organism>
    <name type="scientific">Haemophilus ducreyi (strain 35000HP / ATCC 700724)</name>
    <dbReference type="NCBI Taxonomy" id="233412"/>
    <lineage>
        <taxon>Bacteria</taxon>
        <taxon>Pseudomonadati</taxon>
        <taxon>Pseudomonadota</taxon>
        <taxon>Gammaproteobacteria</taxon>
        <taxon>Pasteurellales</taxon>
        <taxon>Pasteurellaceae</taxon>
        <taxon>Haemophilus</taxon>
    </lineage>
</organism>